<gene>
    <name evidence="7" type="primary">pycC</name>
    <name evidence="6" type="ORF">GEV1001_09735</name>
</gene>
<keyword id="KW-0051">Antiviral defense</keyword>
<keyword id="KW-0963">Cytoplasm</keyword>
<keyword id="KW-0456">Lyase</keyword>
<keyword id="KW-0464">Manganese</keyword>
<keyword id="KW-0479">Metal-binding</keyword>
<keyword id="KW-0547">Nucleotide-binding</keyword>
<protein>
    <recommendedName>
        <fullName evidence="7">Uridylate cyclase</fullName>
        <ecNumber evidence="9">4.6.1.26</ecNumber>
    </recommendedName>
    <alternativeName>
        <fullName>Cyclic UMP synthase</fullName>
        <shortName evidence="7">cUMP synthase</shortName>
    </alternativeName>
    <alternativeName>
        <fullName evidence="7">XpPycC</fullName>
    </alternativeName>
</protein>
<proteinExistence type="evidence at transcript level"/>
<organism>
    <name type="scientific">Xanthomonas perforans</name>
    <dbReference type="NCBI Taxonomy" id="442694"/>
    <lineage>
        <taxon>Bacteria</taxon>
        <taxon>Pseudomonadati</taxon>
        <taxon>Pseudomonadota</taxon>
        <taxon>Gammaproteobacteria</taxon>
        <taxon>Lysobacterales</taxon>
        <taxon>Lysobacteraceae</taxon>
        <taxon>Xanthomonas</taxon>
    </lineage>
</organism>
<dbReference type="EC" id="4.6.1.26" evidence="9"/>
<dbReference type="EMBL" id="JZVV01000016">
    <property type="protein sequence ID" value="KLD05781.1"/>
    <property type="molecule type" value="Genomic_DNA"/>
</dbReference>
<dbReference type="RefSeq" id="WP_046932286.1">
    <property type="nucleotide sequence ID" value="NZ_WMCJ01000014.1"/>
</dbReference>
<dbReference type="SMR" id="P0DV28"/>
<dbReference type="GeneID" id="61777978"/>
<dbReference type="GO" id="GO:0005737">
    <property type="term" value="C:cytoplasm"/>
    <property type="evidence" value="ECO:0007669"/>
    <property type="project" value="UniProtKB-SubCell"/>
</dbReference>
<dbReference type="GO" id="GO:0016829">
    <property type="term" value="F:lyase activity"/>
    <property type="evidence" value="ECO:0007669"/>
    <property type="project" value="UniProtKB-KW"/>
</dbReference>
<dbReference type="GO" id="GO:0046872">
    <property type="term" value="F:metal ion binding"/>
    <property type="evidence" value="ECO:0007669"/>
    <property type="project" value="UniProtKB-KW"/>
</dbReference>
<dbReference type="GO" id="GO:0000166">
    <property type="term" value="F:nucleotide binding"/>
    <property type="evidence" value="ECO:0007669"/>
    <property type="project" value="UniProtKB-KW"/>
</dbReference>
<dbReference type="GO" id="GO:0051607">
    <property type="term" value="P:defense response to virus"/>
    <property type="evidence" value="ECO:0007669"/>
    <property type="project" value="UniProtKB-KW"/>
</dbReference>
<dbReference type="Gene3D" id="3.30.70.1230">
    <property type="entry name" value="Nucleotide cyclase"/>
    <property type="match status" value="1"/>
</dbReference>
<dbReference type="InterPro" id="IPR029787">
    <property type="entry name" value="Nucleotide_cyclase"/>
</dbReference>
<dbReference type="SUPFAM" id="SSF55073">
    <property type="entry name" value="Nucleotide cyclase"/>
    <property type="match status" value="1"/>
</dbReference>
<sequence length="231" mass="25965">MGLKDELTTFCHDVFNGNWETTEGKNVPDEDSRLTLKNTAITIDGTVLYADLDGSTAMVDGYKNWFAAEIYKTYLYCCARIIAAEGGVVTAYDGDRVMALFIGERKNTRAARAAMKIKWAVDEIIMPKKDARYTSNKFALKHVTGIDTCSLFVAKTGARGANDLVWVGRAANYAAKLTSLPSTYTYITESVYKMLADEAKTSNGKSMWEKVTWNTFNNSTIYRSNWRWRID</sequence>
<comment type="function">
    <text evidence="5">Pycsar (pyrimidine cyclase system for antiphage resistance) provides immunity against bacteriophage. The pyrimidine cyclase (PycC) synthesizes cyclic nucleotides in response to infection; these serve as specific second messenger signals. The signal activates the adjacent effector, leading to bacterial cell death and abortive phage infection. A clade B Pycsar system.</text>
</comment>
<comment type="function">
    <text evidence="5 9">The pyrimidine cyclase gene of a two-gene Pycsar system, generates cyclic UMP (cUMP) from UTP probably in response to bacteriophage infection (Probable). Expression of this and adjacent effector XpPycTIR (AC P0DV29) confers resistance to bacteriophage T7. When cells expressing the Pycsar system are infected phage T7 at low multiplicity of infection (0.2 MOI) the culture survives, at 2.0 MOI bacteria enter growth arrest. The same cells enter growth arrest after exposure to 2.5 mM cUMP but not cCMP; the effector protein responds only to the cUMP produced by its cognate NTP cyclase (PubMed:34644530).</text>
</comment>
<comment type="catalytic activity">
    <reaction evidence="5">
        <text>UTP = 3',5'-cyclic UMP + diphosphate</text>
        <dbReference type="Rhea" id="RHEA:69603"/>
        <dbReference type="ChEBI" id="CHEBI:33019"/>
        <dbReference type="ChEBI" id="CHEBI:46398"/>
        <dbReference type="ChEBI" id="CHEBI:184387"/>
        <dbReference type="EC" id="4.6.1.26"/>
    </reaction>
</comment>
<comment type="cofactor">
    <cofactor evidence="2">
        <name>Mn(2+)</name>
        <dbReference type="ChEBI" id="CHEBI:29035"/>
    </cofactor>
</comment>
<comment type="subunit">
    <text evidence="1">Homodimer.</text>
</comment>
<comment type="subcellular location">
    <subcellularLocation>
        <location evidence="8">Cytoplasm</location>
    </subcellularLocation>
</comment>
<comment type="induction">
    <text evidence="5">Expression is probably induced by infection with phage T7.</text>
</comment>
<comment type="similarity">
    <text evidence="9">Belongs to the adenylyl cyclase class-4/guanylyl cyclase family. Pyrimidine cyclase subfamily.</text>
</comment>
<accession>P0DV28</accession>
<name>PYCC_XANPE</name>
<reference key="1">
    <citation type="journal article" date="2015" name="Front. Microbiol.">
        <title>Phylogenomics of Xanthomonas field strains infecting pepper and tomato reveals diversity in effector repertoires and identifies determinants of host specificity.</title>
        <authorList>
            <person name="Schwartz A.R."/>
            <person name="Potnis N."/>
            <person name="Timilsina S."/>
            <person name="Wilson M."/>
            <person name="Patane J."/>
            <person name="Martins J. Jr."/>
            <person name="Minsavage G.V."/>
            <person name="Dahlbeck D."/>
            <person name="Akhunova A."/>
            <person name="Almeida N."/>
            <person name="Vallad G.E."/>
            <person name="Barak J.D."/>
            <person name="White F.F."/>
            <person name="Miller S.A."/>
            <person name="Ritchie D."/>
            <person name="Goss E."/>
            <person name="Bart R.S."/>
            <person name="Setubal J.C."/>
            <person name="Jones J.B."/>
            <person name="Staskawicz B.J."/>
        </authorList>
    </citation>
    <scope>NUCLEOTIDE SEQUENCE [LARGE SCALE GENOMIC DNA]</scope>
    <source>
        <strain>GEV1001</strain>
    </source>
</reference>
<reference key="2">
    <citation type="journal article" date="2021" name="Cell">
        <title>Cyclic CMP and cyclic UMP mediate bacterial immunity against phages.</title>
        <authorList>
            <person name="Tal N."/>
            <person name="Morehouse B.R."/>
            <person name="Millman A."/>
            <person name="Stokar-Avihail A."/>
            <person name="Avraham C."/>
            <person name="Fedorenko T."/>
            <person name="Yirmiya E."/>
            <person name="Herbst E."/>
            <person name="Brandis A."/>
            <person name="Mehlman T."/>
            <person name="Oppenheimer-Shaanan Y."/>
            <person name="Keszei A.F.A."/>
            <person name="Shao S."/>
            <person name="Amitai G."/>
            <person name="Kranzusch P.J."/>
            <person name="Sorek R."/>
        </authorList>
    </citation>
    <scope>FUNCTION</scope>
    <scope>ANTIVIRAL DEFENSE</scope>
    <scope>INDUCTION</scope>
    <scope>CLASSIFICATION</scope>
    <source>
        <strain>GEV1001</strain>
    </source>
</reference>
<feature type="chain" id="PRO_0000455229" description="Uridylate cyclase">
    <location>
        <begin position="1"/>
        <end position="231"/>
    </location>
</feature>
<feature type="domain" description="Guanylate cyclase" evidence="4">
    <location>
        <begin position="46"/>
        <end position="178"/>
    </location>
</feature>
<feature type="binding site" evidence="3 9">
    <location>
        <position position="49"/>
    </location>
    <ligand>
        <name>a ribonucleoside 5'-triphosphate</name>
        <dbReference type="ChEBI" id="CHEBI:61557"/>
    </ligand>
</feature>
<feature type="binding site" evidence="9">
    <location>
        <position position="51"/>
    </location>
    <ligand>
        <name>Mn(2+)</name>
        <dbReference type="ChEBI" id="CHEBI:29035"/>
        <label>1</label>
    </ligand>
</feature>
<feature type="binding site" evidence="9">
    <location>
        <position position="51"/>
    </location>
    <ligand>
        <name>Mn(2+)</name>
        <dbReference type="ChEBI" id="CHEBI:29035"/>
        <label>2</label>
    </ligand>
</feature>
<feature type="binding site" evidence="9">
    <location>
        <position position="95"/>
    </location>
    <ligand>
        <name>Mn(2+)</name>
        <dbReference type="ChEBI" id="CHEBI:29035"/>
        <label>1</label>
    </ligand>
</feature>
<feature type="binding site" evidence="9">
    <location>
        <position position="95"/>
    </location>
    <ligand>
        <name>Mn(2+)</name>
        <dbReference type="ChEBI" id="CHEBI:29035"/>
        <label>2</label>
    </ligand>
</feature>
<feature type="binding site" evidence="3 9">
    <location>
        <position position="96"/>
    </location>
    <ligand>
        <name>a ribonucleoside 5'-triphosphate</name>
        <dbReference type="ChEBI" id="CHEBI:61557"/>
    </ligand>
</feature>
<evidence type="ECO:0000250" key="1">
    <source>
        <dbReference type="UniProtKB" id="A0A0J5ZXG5"/>
    </source>
</evidence>
<evidence type="ECO:0000250" key="2">
    <source>
        <dbReference type="UniProtKB" id="P0DV24"/>
    </source>
</evidence>
<evidence type="ECO:0000250" key="3">
    <source>
        <dbReference type="UniProtKB" id="P0DV40"/>
    </source>
</evidence>
<evidence type="ECO:0000255" key="4">
    <source>
        <dbReference type="PROSITE-ProRule" id="PRU00099"/>
    </source>
</evidence>
<evidence type="ECO:0000269" key="5">
    <source>
    </source>
</evidence>
<evidence type="ECO:0000303" key="6">
    <source>
    </source>
</evidence>
<evidence type="ECO:0000303" key="7">
    <source>
    </source>
</evidence>
<evidence type="ECO:0000305" key="8"/>
<evidence type="ECO:0000305" key="9">
    <source>
    </source>
</evidence>